<reference key="1">
    <citation type="journal article" date="1997" name="Biosci. Biotechnol. Biochem.">
        <title>Cloning of a gene encoding a putative xylanase with a cellulose-binding domain from Humicola grisea.</title>
        <authorList>
            <person name="Iikura H."/>
            <person name="Takashima S."/>
            <person name="Nakamura A."/>
            <person name="Masaki H."/>
            <person name="Uozumi T."/>
        </authorList>
    </citation>
    <scope>NUCLEOTIDE SEQUENCE [GENOMIC DNA]</scope>
    <scope>INDUCTION</scope>
</reference>
<accession>P79046</accession>
<keyword id="KW-0119">Carbohydrate metabolism</keyword>
<keyword id="KW-1015">Disulfide bond</keyword>
<keyword id="KW-0326">Glycosidase</keyword>
<keyword id="KW-0378">Hydrolase</keyword>
<keyword id="KW-0624">Polysaccharide degradation</keyword>
<keyword id="KW-0964">Secreted</keyword>
<keyword id="KW-0732">Signal</keyword>
<keyword id="KW-0858">Xylan degradation</keyword>
<sequence>MQTKSILTAALLAAAPASAQLHELAVKAGLKYFGTALREGAINSDQQYNRILSDTREFGQLVPENGQKWDATEPNRGQFNFQQGDITANKARQNGQGLRCHTLIWYSQLPGWVSSGNWNRQTLEAVMKTHIDNVMGHYKGQCYAWDVVNEAVDDNGQWRNNVFLRVFGTDYLPLSFNLAKAADPDTKLYYNDYNLEYNQAKTDRAVELVKIVQDAGAPIDGVGFQGHLIVGSTPTRQQLATVLRRFTSLGVEVAYTELDIRHSRLPASQQALVTQGNDFANVVGSCLDVAGCVGVTVWSFTDKYSWIPETFSGEGDALIYDRNFNKKPAWTSISSVLAAAATNPPASSSTSVVVPTTTFVTTTTTPPPISSPIVPSTTTTSAVPTTTVSPPEPEQTRWGQCGGIGWNGPTKCQSPWTCTRLNDWYFQCL</sequence>
<gene>
    <name evidence="7" type="primary">xyn1</name>
</gene>
<proteinExistence type="evidence at transcript level"/>
<comment type="function">
    <text evidence="9">Endo-1,4-beta-xylanase involved in the hydrolysis of xylan, a major structural heterogeneous polysaccharide found in plant biomass representing the second most abundant polysaccharide in the biosphere, after cellulose.</text>
</comment>
<comment type="catalytic activity">
    <reaction evidence="9">
        <text>Endohydrolysis of (1-&gt;4)-beta-D-xylosidic linkages in xylans.</text>
        <dbReference type="EC" id="3.2.1.8"/>
    </reaction>
</comment>
<comment type="pathway">
    <text evidence="9">Glycan degradation; xylan degradation.</text>
</comment>
<comment type="subcellular location">
    <subcellularLocation>
        <location evidence="9">Secreted</location>
    </subcellularLocation>
</comment>
<comment type="induction">
    <text evidence="6">Induced by xylan and Avicel, and repressed by glucose.</text>
</comment>
<comment type="similarity">
    <text evidence="8">Belongs to the glycosyl hydrolase 10 (cellulase F) family.</text>
</comment>
<dbReference type="EC" id="3.2.1.8" evidence="9"/>
<dbReference type="EMBL" id="AB001030">
    <property type="protein sequence ID" value="BAA19220.1"/>
    <property type="molecule type" value="Genomic_DNA"/>
</dbReference>
<dbReference type="PIR" id="JC5861">
    <property type="entry name" value="JC5861"/>
</dbReference>
<dbReference type="SMR" id="P79046"/>
<dbReference type="CAZy" id="CBM1">
    <property type="family name" value="Carbohydrate-Binding Module Family 1"/>
</dbReference>
<dbReference type="CAZy" id="GH10">
    <property type="family name" value="Glycoside Hydrolase Family 10"/>
</dbReference>
<dbReference type="UniPathway" id="UPA00114"/>
<dbReference type="GO" id="GO:0005576">
    <property type="term" value="C:extracellular region"/>
    <property type="evidence" value="ECO:0007669"/>
    <property type="project" value="UniProtKB-SubCell"/>
</dbReference>
<dbReference type="GO" id="GO:0030248">
    <property type="term" value="F:cellulose binding"/>
    <property type="evidence" value="ECO:0007669"/>
    <property type="project" value="InterPro"/>
</dbReference>
<dbReference type="GO" id="GO:0031176">
    <property type="term" value="F:endo-1,4-beta-xylanase activity"/>
    <property type="evidence" value="ECO:0007669"/>
    <property type="project" value="UniProtKB-EC"/>
</dbReference>
<dbReference type="GO" id="GO:0045493">
    <property type="term" value="P:xylan catabolic process"/>
    <property type="evidence" value="ECO:0007669"/>
    <property type="project" value="UniProtKB-UniPathway"/>
</dbReference>
<dbReference type="Gene3D" id="3.20.20.80">
    <property type="entry name" value="Glycosidases"/>
    <property type="match status" value="1"/>
</dbReference>
<dbReference type="InterPro" id="IPR035971">
    <property type="entry name" value="CBD_sf"/>
</dbReference>
<dbReference type="InterPro" id="IPR000254">
    <property type="entry name" value="Cellulose-bd_dom_fun"/>
</dbReference>
<dbReference type="InterPro" id="IPR044846">
    <property type="entry name" value="GH10"/>
</dbReference>
<dbReference type="InterPro" id="IPR001000">
    <property type="entry name" value="GH10_dom"/>
</dbReference>
<dbReference type="InterPro" id="IPR017853">
    <property type="entry name" value="Glycoside_hydrolase_SF"/>
</dbReference>
<dbReference type="PANTHER" id="PTHR31490:SF35">
    <property type="entry name" value="ENDO-1,4-BETA-XYLANASE"/>
    <property type="match status" value="1"/>
</dbReference>
<dbReference type="PANTHER" id="PTHR31490">
    <property type="entry name" value="GLYCOSYL HYDROLASE"/>
    <property type="match status" value="1"/>
</dbReference>
<dbReference type="Pfam" id="PF00734">
    <property type="entry name" value="CBM_1"/>
    <property type="match status" value="1"/>
</dbReference>
<dbReference type="Pfam" id="PF00331">
    <property type="entry name" value="Glyco_hydro_10"/>
    <property type="match status" value="1"/>
</dbReference>
<dbReference type="PRINTS" id="PR00134">
    <property type="entry name" value="GLHYDRLASE10"/>
</dbReference>
<dbReference type="SMART" id="SM00236">
    <property type="entry name" value="fCBD"/>
    <property type="match status" value="1"/>
</dbReference>
<dbReference type="SMART" id="SM00633">
    <property type="entry name" value="Glyco_10"/>
    <property type="match status" value="1"/>
</dbReference>
<dbReference type="SUPFAM" id="SSF51445">
    <property type="entry name" value="(Trans)glycosidases"/>
    <property type="match status" value="1"/>
</dbReference>
<dbReference type="SUPFAM" id="SSF57180">
    <property type="entry name" value="Cellulose-binding domain"/>
    <property type="match status" value="1"/>
</dbReference>
<dbReference type="PROSITE" id="PS00562">
    <property type="entry name" value="CBM1_1"/>
    <property type="match status" value="1"/>
</dbReference>
<dbReference type="PROSITE" id="PS51164">
    <property type="entry name" value="CBM1_2"/>
    <property type="match status" value="1"/>
</dbReference>
<dbReference type="PROSITE" id="PS51760">
    <property type="entry name" value="GH10_2"/>
    <property type="match status" value="1"/>
</dbReference>
<organism>
    <name type="scientific">Humicola insolens</name>
    <name type="common">Soft-rot fungus</name>
    <dbReference type="NCBI Taxonomy" id="85995"/>
    <lineage>
        <taxon>Eukaryota</taxon>
        <taxon>Fungi</taxon>
        <taxon>Dikarya</taxon>
        <taxon>Ascomycota</taxon>
        <taxon>Pezizomycotina</taxon>
        <taxon>Sordariomycetes</taxon>
        <taxon>Sordariomycetidae</taxon>
        <taxon>Sordariales</taxon>
        <taxon>Chaetomiaceae</taxon>
        <taxon>Mycothermus</taxon>
    </lineage>
</organism>
<feature type="signal peptide" evidence="2">
    <location>
        <begin position="1"/>
        <end position="19"/>
    </location>
</feature>
<feature type="chain" id="PRO_0000429617" description="Endo-1,4-beta-xylanase 1">
    <location>
        <begin position="20"/>
        <end position="429"/>
    </location>
</feature>
<feature type="domain" description="GH10" evidence="4">
    <location>
        <begin position="43"/>
        <end position="336"/>
    </location>
</feature>
<feature type="domain" description="CBM1" evidence="3">
    <location>
        <begin position="393"/>
        <end position="429"/>
    </location>
</feature>
<feature type="region of interest" description="Disordered" evidence="5">
    <location>
        <begin position="364"/>
        <end position="395"/>
    </location>
</feature>
<feature type="compositionally biased region" description="Low complexity" evidence="5">
    <location>
        <begin position="371"/>
        <end position="389"/>
    </location>
</feature>
<feature type="active site" description="Proton donor" evidence="1">
    <location>
        <position position="150"/>
    </location>
</feature>
<feature type="active site" description="Nucleophile" evidence="1">
    <location>
        <position position="257"/>
    </location>
</feature>
<feature type="disulfide bond" evidence="1">
    <location>
        <begin position="286"/>
        <end position="292"/>
    </location>
</feature>
<evidence type="ECO:0000250" key="1"/>
<evidence type="ECO:0000255" key="2"/>
<evidence type="ECO:0000255" key="3">
    <source>
        <dbReference type="PROSITE-ProRule" id="PRU00597"/>
    </source>
</evidence>
<evidence type="ECO:0000255" key="4">
    <source>
        <dbReference type="PROSITE-ProRule" id="PRU01096"/>
    </source>
</evidence>
<evidence type="ECO:0000256" key="5">
    <source>
        <dbReference type="SAM" id="MobiDB-lite"/>
    </source>
</evidence>
<evidence type="ECO:0000269" key="6">
    <source>
    </source>
</evidence>
<evidence type="ECO:0000303" key="7">
    <source>
    </source>
</evidence>
<evidence type="ECO:0000305" key="8"/>
<evidence type="ECO:0000305" key="9">
    <source>
    </source>
</evidence>
<protein>
    <recommendedName>
        <fullName evidence="7">Endo-1,4-beta-xylanase 1</fullName>
        <shortName evidence="7">Xylanase 1</shortName>
        <ecNumber evidence="9">3.2.1.8</ecNumber>
    </recommendedName>
    <alternativeName>
        <fullName evidence="7">1,4-beta-D-xylan xylanohydrolase 1</fullName>
    </alternativeName>
</protein>
<name>XYN1A_HUMIN</name>